<protein>
    <recommendedName>
        <fullName>Uncharacterized protein ZK112.6</fullName>
    </recommendedName>
</protein>
<sequence length="149" mass="16959">MSLLKKCIGLDPNIRKPLDIGLIWEGNYWDDKDVHDCCDVDWETCEILVRKIAKALVLPTSPIDNGGIENKKILIFLPKVMQLPLTILAAYRVGLIGIVMDPLVSKNKVLEKIIMCEKPRIVVTVDAVWQAQELIEIKSKVEVRSIYEY</sequence>
<proteinExistence type="predicted"/>
<accession>P34615</accession>
<gene>
    <name type="ORF">ZK112.6</name>
</gene>
<feature type="chain" id="PRO_0000065503" description="Uncharacterized protein ZK112.6">
    <location>
        <begin position="1"/>
        <end position="149"/>
    </location>
</feature>
<name>YOG6_CAEEL</name>
<dbReference type="EMBL" id="FO080308">
    <property type="protein sequence ID" value="CCD62767.1"/>
    <property type="molecule type" value="Genomic_DNA"/>
</dbReference>
<dbReference type="PIR" id="S44888">
    <property type="entry name" value="S44888"/>
</dbReference>
<dbReference type="RefSeq" id="NP_498686.2">
    <property type="nucleotide sequence ID" value="NM_066285.2"/>
</dbReference>
<dbReference type="SMR" id="P34615"/>
<dbReference type="FunCoup" id="P34615">
    <property type="interactions" value="226"/>
</dbReference>
<dbReference type="STRING" id="6239.ZK112.6.1"/>
<dbReference type="PaxDb" id="6239-ZK112.6"/>
<dbReference type="PeptideAtlas" id="P34615"/>
<dbReference type="EnsemblMetazoa" id="ZK112.6.1">
    <property type="protein sequence ID" value="ZK112.6.1"/>
    <property type="gene ID" value="WBGene00022662"/>
</dbReference>
<dbReference type="UCSC" id="ZK112.6">
    <property type="organism name" value="c. elegans"/>
</dbReference>
<dbReference type="WormBase" id="ZK112.6">
    <property type="protein sequence ID" value="CE39456"/>
    <property type="gene ID" value="WBGene00022662"/>
</dbReference>
<dbReference type="eggNOG" id="ENOG502RT75">
    <property type="taxonomic scope" value="Eukaryota"/>
</dbReference>
<dbReference type="HOGENOM" id="CLU_1751352_0_0_1"/>
<dbReference type="InParanoid" id="P34615"/>
<dbReference type="OMA" id="CEKPRIV"/>
<dbReference type="PhylomeDB" id="P34615"/>
<dbReference type="PRO" id="PR:P34615"/>
<dbReference type="Proteomes" id="UP000001940">
    <property type="component" value="Chromosome III"/>
</dbReference>
<dbReference type="Bgee" id="WBGene00022662">
    <property type="expression patterns" value="Expressed in embryo and 4 other cell types or tissues"/>
</dbReference>
<dbReference type="Gene3D" id="3.40.50.12780">
    <property type="entry name" value="N-terminal domain of ligase-like"/>
    <property type="match status" value="1"/>
</dbReference>
<dbReference type="InterPro" id="IPR042099">
    <property type="entry name" value="ANL_N_sf"/>
</dbReference>
<dbReference type="PANTHER" id="PTHR24095">
    <property type="entry name" value="ACETYL-COENZYME A SYNTHETASE"/>
    <property type="match status" value="1"/>
</dbReference>
<dbReference type="PANTHER" id="PTHR24095:SF244">
    <property type="entry name" value="ACETYL-COENZYME A SYNTHETASE"/>
    <property type="match status" value="1"/>
</dbReference>
<keyword id="KW-1185">Reference proteome</keyword>
<reference key="1">
    <citation type="journal article" date="1994" name="Nature">
        <title>2.2 Mb of contiguous nucleotide sequence from chromosome III of C. elegans.</title>
        <authorList>
            <person name="Wilson R."/>
            <person name="Ainscough R."/>
            <person name="Anderson K."/>
            <person name="Baynes C."/>
            <person name="Berks M."/>
            <person name="Bonfield J."/>
            <person name="Burton J."/>
            <person name="Connell M."/>
            <person name="Copsey T."/>
            <person name="Cooper J."/>
            <person name="Coulson A."/>
            <person name="Craxton M."/>
            <person name="Dear S."/>
            <person name="Du Z."/>
            <person name="Durbin R."/>
            <person name="Favello A."/>
            <person name="Fraser A."/>
            <person name="Fulton L."/>
            <person name="Gardner A."/>
            <person name="Green P."/>
            <person name="Hawkins T."/>
            <person name="Hillier L."/>
            <person name="Jier M."/>
            <person name="Johnston L."/>
            <person name="Jones M."/>
            <person name="Kershaw J."/>
            <person name="Kirsten J."/>
            <person name="Laisster N."/>
            <person name="Latreille P."/>
            <person name="Lightning J."/>
            <person name="Lloyd C."/>
            <person name="Mortimore B."/>
            <person name="O'Callaghan M."/>
            <person name="Parsons J."/>
            <person name="Percy C."/>
            <person name="Rifken L."/>
            <person name="Roopra A."/>
            <person name="Saunders D."/>
            <person name="Shownkeen R."/>
            <person name="Sims M."/>
            <person name="Smaldon N."/>
            <person name="Smith A."/>
            <person name="Smith M."/>
            <person name="Sonnhammer E."/>
            <person name="Staden R."/>
            <person name="Sulston J."/>
            <person name="Thierry-Mieg J."/>
            <person name="Thomas K."/>
            <person name="Vaudin M."/>
            <person name="Vaughan K."/>
            <person name="Waterston R."/>
            <person name="Watson A."/>
            <person name="Weinstock L."/>
            <person name="Wilkinson-Sproat J."/>
            <person name="Wohldman P."/>
        </authorList>
    </citation>
    <scope>NUCLEOTIDE SEQUENCE [LARGE SCALE GENOMIC DNA]</scope>
    <source>
        <strain>Bristol N2</strain>
    </source>
</reference>
<reference key="2">
    <citation type="journal article" date="1998" name="Science">
        <title>Genome sequence of the nematode C. elegans: a platform for investigating biology.</title>
        <authorList>
            <consortium name="The C. elegans sequencing consortium"/>
        </authorList>
    </citation>
    <scope>NUCLEOTIDE SEQUENCE [LARGE SCALE GENOMIC DNA]</scope>
    <source>
        <strain>Bristol N2</strain>
    </source>
</reference>
<organism>
    <name type="scientific">Caenorhabditis elegans</name>
    <dbReference type="NCBI Taxonomy" id="6239"/>
    <lineage>
        <taxon>Eukaryota</taxon>
        <taxon>Metazoa</taxon>
        <taxon>Ecdysozoa</taxon>
        <taxon>Nematoda</taxon>
        <taxon>Chromadorea</taxon>
        <taxon>Rhabditida</taxon>
        <taxon>Rhabditina</taxon>
        <taxon>Rhabditomorpha</taxon>
        <taxon>Rhabditoidea</taxon>
        <taxon>Rhabditidae</taxon>
        <taxon>Peloderinae</taxon>
        <taxon>Caenorhabditis</taxon>
    </lineage>
</organism>